<organism>
    <name type="scientific">Salmonella paratyphi A (strain AKU_12601)</name>
    <dbReference type="NCBI Taxonomy" id="554290"/>
    <lineage>
        <taxon>Bacteria</taxon>
        <taxon>Pseudomonadati</taxon>
        <taxon>Pseudomonadota</taxon>
        <taxon>Gammaproteobacteria</taxon>
        <taxon>Enterobacterales</taxon>
        <taxon>Enterobacteriaceae</taxon>
        <taxon>Salmonella</taxon>
    </lineage>
</organism>
<reference key="1">
    <citation type="journal article" date="2009" name="BMC Genomics">
        <title>Pseudogene accumulation in the evolutionary histories of Salmonella enterica serovars Paratyphi A and Typhi.</title>
        <authorList>
            <person name="Holt K.E."/>
            <person name="Thomson N.R."/>
            <person name="Wain J."/>
            <person name="Langridge G.C."/>
            <person name="Hasan R."/>
            <person name="Bhutta Z.A."/>
            <person name="Quail M.A."/>
            <person name="Norbertczak H."/>
            <person name="Walker D."/>
            <person name="Simmonds M."/>
            <person name="White B."/>
            <person name="Bason N."/>
            <person name="Mungall K."/>
            <person name="Dougan G."/>
            <person name="Parkhill J."/>
        </authorList>
    </citation>
    <scope>NUCLEOTIDE SEQUENCE [LARGE SCALE GENOMIC DNA]</scope>
    <source>
        <strain>AKU_12601</strain>
    </source>
</reference>
<proteinExistence type="inferred from homology"/>
<comment type="function">
    <text evidence="1">Responsible for the transport of dicarboxylates such as succinate, fumarate, and malate from the periplasm across the membrane.</text>
</comment>
<comment type="subcellular location">
    <subcellularLocation>
        <location evidence="1">Cell inner membrane</location>
        <topology evidence="1">Multi-pass membrane protein</topology>
    </subcellularLocation>
</comment>
<comment type="similarity">
    <text evidence="1">Belongs to the dicarboxylate/amino acid:cation symporter (DAACS) (TC 2.A.23) family.</text>
</comment>
<accession>B5BHQ7</accession>
<feature type="chain" id="PRO_1000140469" description="C4-dicarboxylate transport protein">
    <location>
        <begin position="1"/>
        <end position="435"/>
    </location>
</feature>
<feature type="transmembrane region" description="Helical" evidence="1">
    <location>
        <begin position="4"/>
        <end position="24"/>
    </location>
</feature>
<feature type="transmembrane region" description="Helical" evidence="1">
    <location>
        <begin position="44"/>
        <end position="64"/>
    </location>
</feature>
<feature type="transmembrane region" description="Helical" evidence="1">
    <location>
        <begin position="76"/>
        <end position="96"/>
    </location>
</feature>
<feature type="transmembrane region" description="Helical" evidence="1">
    <location>
        <begin position="142"/>
        <end position="162"/>
    </location>
</feature>
<feature type="transmembrane region" description="Helical" evidence="1">
    <location>
        <begin position="184"/>
        <end position="204"/>
    </location>
</feature>
<feature type="transmembrane region" description="Helical" evidence="1">
    <location>
        <begin position="222"/>
        <end position="242"/>
    </location>
</feature>
<feature type="transmembrane region" description="Helical" evidence="1">
    <location>
        <begin position="289"/>
        <end position="309"/>
    </location>
</feature>
<feature type="transmembrane region" description="Helical" evidence="1">
    <location>
        <begin position="326"/>
        <end position="346"/>
    </location>
</feature>
<feature type="transmembrane region" description="Helical" evidence="1">
    <location>
        <begin position="352"/>
        <end position="372"/>
    </location>
</feature>
<keyword id="KW-0997">Cell inner membrane</keyword>
<keyword id="KW-1003">Cell membrane</keyword>
<keyword id="KW-0472">Membrane</keyword>
<keyword id="KW-0769">Symport</keyword>
<keyword id="KW-0812">Transmembrane</keyword>
<keyword id="KW-1133">Transmembrane helix</keyword>
<keyword id="KW-0813">Transport</keyword>
<evidence type="ECO:0000255" key="1">
    <source>
        <dbReference type="HAMAP-Rule" id="MF_01300"/>
    </source>
</evidence>
<protein>
    <recommendedName>
        <fullName evidence="1">C4-dicarboxylate transport protein</fullName>
    </recommendedName>
</protein>
<sequence>MKTSLFKSLYFQVLTAIAIGILLGHYYPELGAQMKPLGDAFVKLIKMIIAPVIFCTVVTGIAGMESMKAVGRTGAVALLYFEIVSTIALIIGLIIVNVVQPGAGMNVDPATLDAQAVAVYAAQAKEQGIIAFLMDVIPGSVIGAFASGNILQVLLFAVLFGFALHRLGSKGQLIFNVIESFSQVIFGIINMIMRLAPIGAFGAMAFTIGKYGVGSLVQLGQLIICFYITCILFVVVVLGTIARVTGFSIFKFIRYIREELLIVLGTSSSESALPRMLDKMEKLGCRKSVVGLVIPTGYSFNLDGTSIYLTMAAVFIAQATNSHMDIFHQITLLVVLLLSSKGVAGVTGSGFIVLAATISAVGHLPVAGLALILGIDRFMSEARALTNLVGNGVATVVVAKWVKELDHQKLDDVLNNRAPDGKTHEISSYSRHLCP</sequence>
<gene>
    <name evidence="1" type="primary">dctA</name>
    <name type="ordered locus">SSPA3240</name>
</gene>
<name>DCTA_SALPK</name>
<dbReference type="EMBL" id="FM200053">
    <property type="protein sequence ID" value="CAR61498.1"/>
    <property type="molecule type" value="Genomic_DNA"/>
</dbReference>
<dbReference type="RefSeq" id="WP_000858230.1">
    <property type="nucleotide sequence ID" value="NC_011147.1"/>
</dbReference>
<dbReference type="SMR" id="B5BHQ7"/>
<dbReference type="KEGG" id="sek:SSPA3240"/>
<dbReference type="HOGENOM" id="CLU_019375_7_0_6"/>
<dbReference type="Proteomes" id="UP000001869">
    <property type="component" value="Chromosome"/>
</dbReference>
<dbReference type="GO" id="GO:0005886">
    <property type="term" value="C:plasma membrane"/>
    <property type="evidence" value="ECO:0007669"/>
    <property type="project" value="UniProtKB-SubCell"/>
</dbReference>
<dbReference type="GO" id="GO:0015138">
    <property type="term" value="F:fumarate transmembrane transporter activity"/>
    <property type="evidence" value="ECO:0007669"/>
    <property type="project" value="TreeGrafter"/>
</dbReference>
<dbReference type="GO" id="GO:0015366">
    <property type="term" value="F:malate:proton symporter activity"/>
    <property type="evidence" value="ECO:0007669"/>
    <property type="project" value="TreeGrafter"/>
</dbReference>
<dbReference type="GO" id="GO:0015141">
    <property type="term" value="F:succinate transmembrane transporter activity"/>
    <property type="evidence" value="ECO:0007669"/>
    <property type="project" value="TreeGrafter"/>
</dbReference>
<dbReference type="GO" id="GO:0070778">
    <property type="term" value="P:L-aspartate transmembrane transport"/>
    <property type="evidence" value="ECO:0007669"/>
    <property type="project" value="TreeGrafter"/>
</dbReference>
<dbReference type="FunFam" id="1.10.3860.10:FF:000001">
    <property type="entry name" value="C4-dicarboxylate transport protein"/>
    <property type="match status" value="1"/>
</dbReference>
<dbReference type="Gene3D" id="1.10.3860.10">
    <property type="entry name" value="Sodium:dicarboxylate symporter"/>
    <property type="match status" value="1"/>
</dbReference>
<dbReference type="HAMAP" id="MF_01300">
    <property type="entry name" value="C4_dicarb_transport"/>
    <property type="match status" value="1"/>
</dbReference>
<dbReference type="InterPro" id="IPR023954">
    <property type="entry name" value="C4_dicarb_transport"/>
</dbReference>
<dbReference type="InterPro" id="IPR001991">
    <property type="entry name" value="Na-dicarboxylate_symporter"/>
</dbReference>
<dbReference type="InterPro" id="IPR018107">
    <property type="entry name" value="Na-dicarboxylate_symporter_CS"/>
</dbReference>
<dbReference type="InterPro" id="IPR036458">
    <property type="entry name" value="Na:dicarbo_symporter_sf"/>
</dbReference>
<dbReference type="NCBIfam" id="NF002461">
    <property type="entry name" value="PRK01663.1"/>
    <property type="match status" value="1"/>
</dbReference>
<dbReference type="NCBIfam" id="NF009587">
    <property type="entry name" value="PRK13027.1"/>
    <property type="match status" value="1"/>
</dbReference>
<dbReference type="PANTHER" id="PTHR42865:SF1">
    <property type="entry name" value="AEROBIC C4-DICARBOXYLATE TRANSPORT PROTEIN"/>
    <property type="match status" value="1"/>
</dbReference>
<dbReference type="PANTHER" id="PTHR42865">
    <property type="entry name" value="PROTON/GLUTAMATE-ASPARTATE SYMPORTER"/>
    <property type="match status" value="1"/>
</dbReference>
<dbReference type="Pfam" id="PF00375">
    <property type="entry name" value="SDF"/>
    <property type="match status" value="1"/>
</dbReference>
<dbReference type="PRINTS" id="PR00173">
    <property type="entry name" value="EDTRNSPORT"/>
</dbReference>
<dbReference type="SUPFAM" id="SSF118215">
    <property type="entry name" value="Proton glutamate symport protein"/>
    <property type="match status" value="1"/>
</dbReference>
<dbReference type="PROSITE" id="PS00713">
    <property type="entry name" value="NA_DICARBOXYL_SYMP_1"/>
    <property type="match status" value="1"/>
</dbReference>
<dbReference type="PROSITE" id="PS00714">
    <property type="entry name" value="NA_DICARBOXYL_SYMP_2"/>
    <property type="match status" value="1"/>
</dbReference>